<gene>
    <name evidence="1" type="primary">nanA</name>
    <name type="ordered locus">HSM_1106</name>
</gene>
<keyword id="KW-0119">Carbohydrate metabolism</keyword>
<keyword id="KW-0963">Cytoplasm</keyword>
<keyword id="KW-0456">Lyase</keyword>
<keyword id="KW-0704">Schiff base</keyword>
<sequence length="292" mass="32321">MKNLKGIFSALLVSFNEDGSINEKGLREIVRYNIDKMKIDGLYVGGSTGENFMLSTAEKKEIFRIAKEEAKDQVALIAQVGSVNLHEAVELGKYATELGYDSLSAVTPFYYKFSFAEIKHYYETIIAETGNNMIVYSIPFLTGVNMGVEQFGELYANPKVLGVKFTAGDFYLLERLKKAYPNHLVWAGFDEMMLPAVSLGVDGAIGSTFNVNGLRARQIFELAKAGKVAEALEIQHVTNDLIEGILANGLYLTIKEILKLQGVNAGYCREPMTAKATEKQLAVAKELKEKFL</sequence>
<comment type="function">
    <text evidence="1">Catalyzes the reversible aldol cleavage of N-acetylneuraminic acid (sialic acid; Neu5Ac) to form pyruvate and N-acetylmannosamine (ManNAc) via a Schiff base intermediate.</text>
</comment>
<comment type="catalytic activity">
    <reaction evidence="1">
        <text>aceneuramate = aldehydo-N-acetyl-D-mannosamine + pyruvate</text>
        <dbReference type="Rhea" id="RHEA:23296"/>
        <dbReference type="ChEBI" id="CHEBI:15361"/>
        <dbReference type="ChEBI" id="CHEBI:17122"/>
        <dbReference type="ChEBI" id="CHEBI:173083"/>
        <dbReference type="EC" id="4.1.3.3"/>
    </reaction>
</comment>
<comment type="pathway">
    <text evidence="1">Amino-sugar metabolism; N-acetylneuraminate degradation; D-fructose 6-phosphate from N-acetylneuraminate: step 1/5.</text>
</comment>
<comment type="subunit">
    <text evidence="1">Homotetramer.</text>
</comment>
<comment type="subcellular location">
    <subcellularLocation>
        <location evidence="1">Cytoplasm</location>
    </subcellularLocation>
</comment>
<comment type="similarity">
    <text evidence="1">Belongs to the DapA family. NanA subfamily.</text>
</comment>
<name>NANA_HISS2</name>
<feature type="chain" id="PRO_1000085737" description="N-acetylneuraminate lyase">
    <location>
        <begin position="1"/>
        <end position="292"/>
    </location>
</feature>
<feature type="active site" description="Proton donor" evidence="1">
    <location>
        <position position="136"/>
    </location>
</feature>
<feature type="active site" description="Schiff-base intermediate with substrate" evidence="1">
    <location>
        <position position="164"/>
    </location>
</feature>
<feature type="binding site" evidence="1">
    <location>
        <position position="47"/>
    </location>
    <ligand>
        <name>aceneuramate</name>
        <dbReference type="ChEBI" id="CHEBI:173083"/>
    </ligand>
</feature>
<feature type="binding site" evidence="1">
    <location>
        <position position="48"/>
    </location>
    <ligand>
        <name>aceneuramate</name>
        <dbReference type="ChEBI" id="CHEBI:173083"/>
    </ligand>
</feature>
<feature type="binding site" evidence="1">
    <location>
        <position position="166"/>
    </location>
    <ligand>
        <name>aceneuramate</name>
        <dbReference type="ChEBI" id="CHEBI:173083"/>
    </ligand>
</feature>
<feature type="binding site" evidence="1">
    <location>
        <position position="188"/>
    </location>
    <ligand>
        <name>aceneuramate</name>
        <dbReference type="ChEBI" id="CHEBI:173083"/>
    </ligand>
</feature>
<feature type="binding site" evidence="1">
    <location>
        <position position="190"/>
    </location>
    <ligand>
        <name>aceneuramate</name>
        <dbReference type="ChEBI" id="CHEBI:173083"/>
    </ligand>
</feature>
<feature type="binding site" evidence="1">
    <location>
        <position position="191"/>
    </location>
    <ligand>
        <name>aceneuramate</name>
        <dbReference type="ChEBI" id="CHEBI:173083"/>
    </ligand>
</feature>
<feature type="binding site" evidence="1">
    <location>
        <position position="207"/>
    </location>
    <ligand>
        <name>aceneuramate</name>
        <dbReference type="ChEBI" id="CHEBI:173083"/>
    </ligand>
</feature>
<proteinExistence type="inferred from homology"/>
<accession>B0UTI7</accession>
<organism>
    <name type="scientific">Histophilus somni (strain 2336)</name>
    <name type="common">Haemophilus somnus</name>
    <dbReference type="NCBI Taxonomy" id="228400"/>
    <lineage>
        <taxon>Bacteria</taxon>
        <taxon>Pseudomonadati</taxon>
        <taxon>Pseudomonadota</taxon>
        <taxon>Gammaproteobacteria</taxon>
        <taxon>Pasteurellales</taxon>
        <taxon>Pasteurellaceae</taxon>
        <taxon>Histophilus</taxon>
    </lineage>
</organism>
<protein>
    <recommendedName>
        <fullName evidence="1">N-acetylneuraminate lyase</fullName>
        <shortName evidence="1">NAL</shortName>
        <shortName evidence="1">Neu5Ac lyase</shortName>
        <ecNumber evidence="1">4.1.3.3</ecNumber>
    </recommendedName>
    <alternativeName>
        <fullName evidence="1">N-acetylneuraminate pyruvate-lyase</fullName>
    </alternativeName>
    <alternativeName>
        <fullName evidence="1">N-acetylneuraminic acid aldolase</fullName>
    </alternativeName>
    <alternativeName>
        <fullName evidence="1">Sialate lyase</fullName>
    </alternativeName>
    <alternativeName>
        <fullName evidence="1">Sialic acid aldolase</fullName>
    </alternativeName>
    <alternativeName>
        <fullName evidence="1">Sialic acid lyase</fullName>
    </alternativeName>
</protein>
<dbReference type="EC" id="4.1.3.3" evidence="1"/>
<dbReference type="EMBL" id="CP000947">
    <property type="protein sequence ID" value="ACA30825.1"/>
    <property type="molecule type" value="Genomic_DNA"/>
</dbReference>
<dbReference type="RefSeq" id="WP_011608851.1">
    <property type="nucleotide sequence ID" value="NC_010519.1"/>
</dbReference>
<dbReference type="SMR" id="B0UTI7"/>
<dbReference type="STRING" id="228400.HSM_1106"/>
<dbReference type="GeneID" id="31487406"/>
<dbReference type="KEGG" id="hsm:HSM_1106"/>
<dbReference type="HOGENOM" id="CLU_049343_6_0_6"/>
<dbReference type="UniPathway" id="UPA00629">
    <property type="reaction ID" value="UER00680"/>
</dbReference>
<dbReference type="GO" id="GO:0005829">
    <property type="term" value="C:cytosol"/>
    <property type="evidence" value="ECO:0007669"/>
    <property type="project" value="TreeGrafter"/>
</dbReference>
<dbReference type="GO" id="GO:0008747">
    <property type="term" value="F:N-acetylneuraminate lyase activity"/>
    <property type="evidence" value="ECO:0007669"/>
    <property type="project" value="UniProtKB-UniRule"/>
</dbReference>
<dbReference type="GO" id="GO:0005975">
    <property type="term" value="P:carbohydrate metabolic process"/>
    <property type="evidence" value="ECO:0007669"/>
    <property type="project" value="UniProtKB-UniRule"/>
</dbReference>
<dbReference type="GO" id="GO:0019262">
    <property type="term" value="P:N-acetylneuraminate catabolic process"/>
    <property type="evidence" value="ECO:0007669"/>
    <property type="project" value="UniProtKB-UniRule"/>
</dbReference>
<dbReference type="CDD" id="cd00954">
    <property type="entry name" value="NAL"/>
    <property type="match status" value="1"/>
</dbReference>
<dbReference type="FunFam" id="3.20.20.70:FF:000039">
    <property type="entry name" value="N-acetylneuraminate lyase"/>
    <property type="match status" value="1"/>
</dbReference>
<dbReference type="Gene3D" id="3.20.20.70">
    <property type="entry name" value="Aldolase class I"/>
    <property type="match status" value="1"/>
</dbReference>
<dbReference type="HAMAP" id="MF_01237">
    <property type="entry name" value="N_acetylneuram_lyase"/>
    <property type="match status" value="1"/>
</dbReference>
<dbReference type="InterPro" id="IPR013785">
    <property type="entry name" value="Aldolase_TIM"/>
</dbReference>
<dbReference type="InterPro" id="IPR002220">
    <property type="entry name" value="DapA-like"/>
</dbReference>
<dbReference type="InterPro" id="IPR005264">
    <property type="entry name" value="NanA"/>
</dbReference>
<dbReference type="InterPro" id="IPR020625">
    <property type="entry name" value="Schiff_base-form_aldolases_AS"/>
</dbReference>
<dbReference type="InterPro" id="IPR020624">
    <property type="entry name" value="Schiff_base-form_aldolases_CS"/>
</dbReference>
<dbReference type="NCBIfam" id="TIGR00683">
    <property type="entry name" value="nanA"/>
    <property type="match status" value="1"/>
</dbReference>
<dbReference type="NCBIfam" id="NF003164">
    <property type="entry name" value="PRK04147.1"/>
    <property type="match status" value="1"/>
</dbReference>
<dbReference type="PANTHER" id="PTHR42849">
    <property type="entry name" value="N-ACETYLNEURAMINATE LYASE"/>
    <property type="match status" value="1"/>
</dbReference>
<dbReference type="PANTHER" id="PTHR42849:SF1">
    <property type="entry name" value="N-ACETYLNEURAMINATE LYASE"/>
    <property type="match status" value="1"/>
</dbReference>
<dbReference type="Pfam" id="PF00701">
    <property type="entry name" value="DHDPS"/>
    <property type="match status" value="1"/>
</dbReference>
<dbReference type="PIRSF" id="PIRSF001365">
    <property type="entry name" value="DHDPS"/>
    <property type="match status" value="1"/>
</dbReference>
<dbReference type="PRINTS" id="PR00146">
    <property type="entry name" value="DHPICSNTHASE"/>
</dbReference>
<dbReference type="SMART" id="SM01130">
    <property type="entry name" value="DHDPS"/>
    <property type="match status" value="1"/>
</dbReference>
<dbReference type="SUPFAM" id="SSF51569">
    <property type="entry name" value="Aldolase"/>
    <property type="match status" value="1"/>
</dbReference>
<dbReference type="PROSITE" id="PS00665">
    <property type="entry name" value="DHDPS_1"/>
    <property type="match status" value="1"/>
</dbReference>
<dbReference type="PROSITE" id="PS00666">
    <property type="entry name" value="DHDPS_2"/>
    <property type="match status" value="1"/>
</dbReference>
<reference key="1">
    <citation type="submission" date="2008-02" db="EMBL/GenBank/DDBJ databases">
        <title>Complete sequence of Haemophilus somnus 2336.</title>
        <authorList>
            <consortium name="US DOE Joint Genome Institute"/>
            <person name="Siddaramappa S."/>
            <person name="Duncan A.J."/>
            <person name="Challacombe J.F."/>
            <person name="Rainey D."/>
            <person name="Gillaspy A.F."/>
            <person name="Carson M."/>
            <person name="Gipson J."/>
            <person name="Gipson M."/>
            <person name="Bruce D."/>
            <person name="Detter J.C."/>
            <person name="Han C.S."/>
            <person name="Land M."/>
            <person name="Tapia R."/>
            <person name="Thompson L.S."/>
            <person name="Orvis J."/>
            <person name="Zaitshik J."/>
            <person name="Barnes G."/>
            <person name="Brettin T.S."/>
            <person name="Dyer D.W."/>
            <person name="Inzana T.J."/>
        </authorList>
    </citation>
    <scope>NUCLEOTIDE SEQUENCE [LARGE SCALE GENOMIC DNA]</scope>
    <source>
        <strain>2336</strain>
    </source>
</reference>
<evidence type="ECO:0000255" key="1">
    <source>
        <dbReference type="HAMAP-Rule" id="MF_01237"/>
    </source>
</evidence>